<keyword id="KW-0002">3D-structure</keyword>
<keyword id="KW-0025">Alternative splicing</keyword>
<keyword id="KW-0963">Cytoplasm</keyword>
<keyword id="KW-0903">Direct protein sequencing</keyword>
<keyword id="KW-1267">Proteomics identification</keyword>
<keyword id="KW-1185">Reference proteome</keyword>
<keyword id="KW-0808">Transferase</keyword>
<proteinExistence type="evidence at protein level"/>
<gene>
    <name type="primary">GSTT1</name>
</gene>
<protein>
    <recommendedName>
        <fullName>Glutathione S-transferase theta-1</fullName>
        <ecNumber evidence="1 3">2.5.1.18</ecNumber>
    </recommendedName>
    <alternativeName>
        <fullName>GST class-theta-1</fullName>
    </alternativeName>
    <alternativeName>
        <fullName>Glutathione transferase T1-1</fullName>
    </alternativeName>
</protein>
<evidence type="ECO:0000269" key="1">
    <source>
    </source>
</evidence>
<evidence type="ECO:0000269" key="2">
    <source>
    </source>
</evidence>
<evidence type="ECO:0000269" key="3">
    <source>
    </source>
</evidence>
<evidence type="ECO:0000269" key="4">
    <source>
    </source>
</evidence>
<evidence type="ECO:0000269" key="5">
    <source>
    </source>
</evidence>
<evidence type="ECO:0000269" key="6">
    <source ref="6"/>
</evidence>
<evidence type="ECO:0000303" key="7">
    <source>
    </source>
</evidence>
<evidence type="ECO:0000305" key="8"/>
<evidence type="ECO:0000305" key="9">
    <source>
    </source>
</evidence>
<evidence type="ECO:0007829" key="10">
    <source>
        <dbReference type="PDB" id="2C3N"/>
    </source>
</evidence>
<accession>P30711</accession>
<accession>O00226</accession>
<accession>Q5TZY2</accession>
<accession>Q6IC69</accession>
<accession>Q969K8</accession>
<accession>Q96IY3</accession>
<feature type="initiator methionine" description="Removed" evidence="2">
    <location>
        <position position="1"/>
    </location>
</feature>
<feature type="chain" id="PRO_0000185938" description="Glutathione S-transferase theta-1">
    <location>
        <begin position="2"/>
        <end position="240"/>
    </location>
</feature>
<feature type="domain" description="GST N-terminal">
    <location>
        <begin position="2"/>
        <end position="82"/>
    </location>
</feature>
<feature type="domain" description="GST C-terminal">
    <location>
        <begin position="88"/>
        <end position="220"/>
    </location>
</feature>
<feature type="binding site" evidence="9">
    <location>
        <position position="40"/>
    </location>
    <ligand>
        <name>glutathione</name>
        <dbReference type="ChEBI" id="CHEBI:57925"/>
    </ligand>
</feature>
<feature type="binding site" evidence="9">
    <location>
        <begin position="53"/>
        <end position="54"/>
    </location>
    <ligand>
        <name>glutathione</name>
        <dbReference type="ChEBI" id="CHEBI:57925"/>
    </ligand>
</feature>
<feature type="binding site" evidence="9">
    <location>
        <begin position="66"/>
        <end position="67"/>
    </location>
    <ligand>
        <name>glutathione</name>
        <dbReference type="ChEBI" id="CHEBI:57925"/>
    </ligand>
</feature>
<feature type="splice variant" id="VSP_056474" description="In isoform 2." evidence="7">
    <location>
        <begin position="1"/>
        <end position="118"/>
    </location>
</feature>
<feature type="sequence variant" id="VAR_014501" description="In dbSNP:rs1601976480.">
    <original>A</original>
    <variation>T</variation>
    <location>
        <position position="21"/>
    </location>
</feature>
<feature type="sequence variant" id="VAR_014502" description="In dbSNP:rs1601989145.">
    <original>D</original>
    <variation>N</variation>
    <location>
        <position position="141"/>
    </location>
</feature>
<feature type="sequence variant" id="VAR_014503" description="In dbSNP:rs2266637." evidence="6">
    <original>V</original>
    <variation>I</variation>
    <location>
        <position position="169"/>
    </location>
</feature>
<feature type="sequence variant" id="VAR_014504" description="In dbSNP:rs1601989046.">
    <original>E</original>
    <variation>K</variation>
    <location>
        <position position="173"/>
    </location>
</feature>
<feature type="mutagenesis site" description="Increases activity towards alkylhalogenides, but not hydroperoxides." evidence="1">
    <original>H</original>
    <variation>Q</variation>
    <location>
        <position position="176"/>
    </location>
</feature>
<feature type="mutagenesis site" description="Facilitates binding of substrates and increases catalytic activity." evidence="1">
    <original>W</original>
    <variation>R</variation>
    <location>
        <position position="234"/>
    </location>
</feature>
<feature type="sequence conflict" description="In Ref. 9; AA sequence." evidence="8" ref="9">
    <original>DA</original>
    <variation>SD</variation>
    <location>
        <begin position="43"/>
        <end position="44"/>
    </location>
</feature>
<feature type="sequence conflict" description="In Ref. 8; AAH07065." evidence="8" ref="8">
    <original>F</original>
    <variation>C</variation>
    <location>
        <position position="45"/>
    </location>
</feature>
<feature type="sequence conflict" description="In Ref. 1; CAA55935." evidence="8" ref="1">
    <original>E</original>
    <variation>G</variation>
    <location>
        <position position="126"/>
    </location>
</feature>
<feature type="strand" evidence="10">
    <location>
        <begin position="3"/>
        <end position="7"/>
    </location>
</feature>
<feature type="helix" evidence="10">
    <location>
        <begin position="12"/>
        <end position="23"/>
    </location>
</feature>
<feature type="strand" evidence="10">
    <location>
        <begin position="29"/>
        <end position="32"/>
    </location>
</feature>
<feature type="helix" evidence="10">
    <location>
        <begin position="35"/>
        <end position="37"/>
    </location>
</feature>
<feature type="helix" evidence="10">
    <location>
        <begin position="39"/>
        <end position="41"/>
    </location>
</feature>
<feature type="helix" evidence="10">
    <location>
        <begin position="43"/>
        <end position="48"/>
    </location>
</feature>
<feature type="strand" evidence="10">
    <location>
        <begin position="56"/>
        <end position="59"/>
    </location>
</feature>
<feature type="strand" evidence="10">
    <location>
        <begin position="62"/>
        <end position="65"/>
    </location>
</feature>
<feature type="helix" evidence="10">
    <location>
        <begin position="67"/>
        <end position="77"/>
    </location>
</feature>
<feature type="helix" evidence="10">
    <location>
        <begin position="82"/>
        <end position="84"/>
    </location>
</feature>
<feature type="helix" evidence="10">
    <location>
        <begin position="89"/>
        <end position="101"/>
    </location>
</feature>
<feature type="helix" evidence="10">
    <location>
        <begin position="102"/>
        <end position="104"/>
    </location>
</feature>
<feature type="helix" evidence="10">
    <location>
        <begin position="106"/>
        <end position="117"/>
    </location>
</feature>
<feature type="helix" evidence="10">
    <location>
        <begin position="118"/>
        <end position="123"/>
    </location>
</feature>
<feature type="helix" evidence="10">
    <location>
        <begin position="130"/>
        <end position="150"/>
    </location>
</feature>
<feature type="turn" evidence="10">
    <location>
        <begin position="151"/>
        <end position="154"/>
    </location>
</feature>
<feature type="strand" evidence="10">
    <location>
        <begin position="155"/>
        <end position="162"/>
    </location>
</feature>
<feature type="helix" evidence="10">
    <location>
        <begin position="165"/>
        <end position="179"/>
    </location>
</feature>
<feature type="helix" evidence="10">
    <location>
        <begin position="189"/>
        <end position="202"/>
    </location>
</feature>
<feature type="helix" evidence="10">
    <location>
        <begin position="204"/>
        <end position="210"/>
    </location>
</feature>
<feature type="helix" evidence="10">
    <location>
        <begin position="212"/>
        <end position="215"/>
    </location>
</feature>
<feature type="helix" evidence="10">
    <location>
        <begin position="216"/>
        <end position="219"/>
    </location>
</feature>
<feature type="helix" evidence="10">
    <location>
        <begin position="225"/>
        <end position="239"/>
    </location>
</feature>
<organism>
    <name type="scientific">Homo sapiens</name>
    <name type="common">Human</name>
    <dbReference type="NCBI Taxonomy" id="9606"/>
    <lineage>
        <taxon>Eukaryota</taxon>
        <taxon>Metazoa</taxon>
        <taxon>Chordata</taxon>
        <taxon>Craniata</taxon>
        <taxon>Vertebrata</taxon>
        <taxon>Euteleostomi</taxon>
        <taxon>Mammalia</taxon>
        <taxon>Eutheria</taxon>
        <taxon>Euarchontoglires</taxon>
        <taxon>Primates</taxon>
        <taxon>Haplorrhini</taxon>
        <taxon>Catarrhini</taxon>
        <taxon>Hominidae</taxon>
        <taxon>Homo</taxon>
    </lineage>
</organism>
<comment type="function">
    <text evidence="1 3">Conjugation of reduced glutathione to a wide number of exogenous and endogenous hydrophobic electrophiles. Acts on 1,2-epoxy-3-(4-nitrophenoxy)propane, phenethylisothiocyanate 4-nitrobenzyl chloride and 4-nitrophenethyl bromide. Displays glutathione peroxidase activity with cumene hydroperoxide.</text>
</comment>
<comment type="catalytic activity">
    <reaction evidence="1 3">
        <text>RX + glutathione = an S-substituted glutathione + a halide anion + H(+)</text>
        <dbReference type="Rhea" id="RHEA:16437"/>
        <dbReference type="ChEBI" id="CHEBI:15378"/>
        <dbReference type="ChEBI" id="CHEBI:16042"/>
        <dbReference type="ChEBI" id="CHEBI:17792"/>
        <dbReference type="ChEBI" id="CHEBI:57925"/>
        <dbReference type="ChEBI" id="CHEBI:90779"/>
        <dbReference type="EC" id="2.5.1.18"/>
    </reaction>
</comment>
<comment type="subunit">
    <text evidence="1">Homodimer.</text>
</comment>
<comment type="interaction">
    <interactant intactId="EBI-8770084">
        <id>P30711</id>
    </interactant>
    <interactant intactId="EBI-77797">
        <id>P35609</id>
        <label>ACTN2</label>
    </interactant>
    <organismsDiffer>false</organismsDiffer>
    <experiments>3</experiments>
</comment>
<comment type="interaction">
    <interactant intactId="EBI-8770084">
        <id>P30711</id>
    </interactant>
    <interactant intactId="EBI-18273118">
        <id>Q9P2M1</id>
        <label>LRP2BP</label>
    </interactant>
    <organismsDiffer>false</organismsDiffer>
    <experiments>2</experiments>
</comment>
<comment type="subcellular location">
    <subcellularLocation>
        <location>Cytoplasm</location>
    </subcellularLocation>
</comment>
<comment type="alternative products">
    <event type="alternative splicing"/>
    <isoform>
        <id>P30711-1</id>
        <name>1</name>
        <sequence type="displayed"/>
    </isoform>
    <isoform>
        <id>P30711-2</id>
        <name>2</name>
        <sequence type="described" ref="VSP_056474"/>
    </isoform>
</comment>
<comment type="tissue specificity">
    <text evidence="5">Found in erythrocyte. Expressed at low levels in liver. In lung, expressed at low levels in club cells and ciliated cells at the alveolar/bronchiolar junction. Absent from epithelial cells of larger bronchioles.</text>
</comment>
<comment type="polymorphism">
    <text evidence="4">The GSTT1 gene is absent from 38% of the population. The presence or absence of the GSTT1 gene is coincident with the conjugator (GSST1+) and non-conjugator (GSTT1-) phenotypes respectively. The GSTT1+ phenotype can catalyze the glutathione conjugation of dichloromethane.</text>
</comment>
<comment type="similarity">
    <text evidence="8">Belongs to the GST superfamily. Theta family.</text>
</comment>
<dbReference type="EC" id="2.5.1.18" evidence="1 3"/>
<dbReference type="EMBL" id="X79389">
    <property type="protein sequence ID" value="CAA55935.1"/>
    <property type="molecule type" value="mRNA"/>
</dbReference>
<dbReference type="EMBL" id="AF435971">
    <property type="protein sequence ID" value="AAL31549.1"/>
    <property type="molecule type" value="mRNA"/>
</dbReference>
<dbReference type="EMBL" id="AF240786">
    <property type="protein sequence ID" value="AAG02374.1"/>
    <property type="molecule type" value="Genomic_DNA"/>
</dbReference>
<dbReference type="EMBL" id="AB057594">
    <property type="protein sequence ID" value="BAB39498.1"/>
    <property type="molecule type" value="Genomic_DNA"/>
</dbReference>
<dbReference type="EMBL" id="CR456499">
    <property type="protein sequence ID" value="CAG30385.1"/>
    <property type="molecule type" value="mRNA"/>
</dbReference>
<dbReference type="EMBL" id="BT019951">
    <property type="protein sequence ID" value="AAV38754.1"/>
    <property type="molecule type" value="mRNA"/>
</dbReference>
<dbReference type="EMBL" id="AP000351">
    <property type="status" value="NOT_ANNOTATED_CDS"/>
    <property type="molecule type" value="Genomic_DNA"/>
</dbReference>
<dbReference type="EMBL" id="Z84718">
    <property type="status" value="NOT_ANNOTATED_CDS"/>
    <property type="molecule type" value="Genomic_DNA"/>
</dbReference>
<dbReference type="EMBL" id="BC007065">
    <property type="protein sequence ID" value="AAH07065.1"/>
    <property type="molecule type" value="mRNA"/>
</dbReference>
<dbReference type="PIR" id="S44358">
    <property type="entry name" value="S44358"/>
</dbReference>
<dbReference type="RefSeq" id="NP_000844.2">
    <molecule id="P30711-1"/>
    <property type="nucleotide sequence ID" value="NM_000853.4"/>
</dbReference>
<dbReference type="RefSeq" id="NP_001280736.1">
    <property type="nucleotide sequence ID" value="NM_001293807.1"/>
</dbReference>
<dbReference type="RefSeq" id="NP_001280737.1">
    <molecule id="P30711-2"/>
    <property type="nucleotide sequence ID" value="NM_001293808.1"/>
</dbReference>
<dbReference type="RefSeq" id="NP_001280738.1">
    <molecule id="P30711-2"/>
    <property type="nucleotide sequence ID" value="NM_001293809.1"/>
</dbReference>
<dbReference type="RefSeq" id="NP_001280739.1">
    <molecule id="P30711-2"/>
    <property type="nucleotide sequence ID" value="NM_001293810.1"/>
</dbReference>
<dbReference type="RefSeq" id="NP_001280740.1">
    <molecule id="P30711-2"/>
    <property type="nucleotide sequence ID" value="NM_001293811.1"/>
</dbReference>
<dbReference type="RefSeq" id="NP_001280741.1">
    <molecule id="P30711-2"/>
    <property type="nucleotide sequence ID" value="NM_001293812.1"/>
</dbReference>
<dbReference type="PDB" id="2C3N">
    <property type="method" value="X-ray"/>
    <property type="resolution" value="1.50 A"/>
    <property type="chains" value="A/B/C/D=2-240"/>
</dbReference>
<dbReference type="PDB" id="2C3Q">
    <property type="method" value="X-ray"/>
    <property type="resolution" value="1.85 A"/>
    <property type="chains" value="A/B/C/D=2-240"/>
</dbReference>
<dbReference type="PDB" id="2C3T">
    <property type="method" value="X-ray"/>
    <property type="resolution" value="2.40 A"/>
    <property type="chains" value="A/B/C/D=2-240"/>
</dbReference>
<dbReference type="PDBsum" id="2C3N"/>
<dbReference type="PDBsum" id="2C3Q"/>
<dbReference type="PDBsum" id="2C3T"/>
<dbReference type="SMR" id="P30711"/>
<dbReference type="BioGRID" id="109207">
    <property type="interactions" value="38"/>
</dbReference>
<dbReference type="FunCoup" id="P30711">
    <property type="interactions" value="278"/>
</dbReference>
<dbReference type="IntAct" id="P30711">
    <property type="interactions" value="16"/>
</dbReference>
<dbReference type="ChEMBL" id="CHEMBL2141"/>
<dbReference type="DrugBank" id="DB00321">
    <property type="generic name" value="Amitriptyline"/>
</dbReference>
<dbReference type="DrugBank" id="DB00958">
    <property type="generic name" value="Carboplatin"/>
</dbReference>
<dbReference type="DrugBank" id="DB00291">
    <property type="generic name" value="Chlorambucil"/>
</dbReference>
<dbReference type="DrugBank" id="DB00515">
    <property type="generic name" value="Cisplatin"/>
</dbReference>
<dbReference type="DrugBank" id="DB03619">
    <property type="generic name" value="Deoxycholic acid"/>
</dbReference>
<dbReference type="DrugBank" id="DB00773">
    <property type="generic name" value="Etoposide"/>
</dbReference>
<dbReference type="DrugBank" id="DB00143">
    <property type="generic name" value="Glutathione"/>
</dbReference>
<dbReference type="DrugBank" id="DB03310">
    <property type="generic name" value="Glutathione disulfide"/>
</dbReference>
<dbReference type="DrugBank" id="DB00526">
    <property type="generic name" value="Oxaliplatin"/>
</dbReference>
<dbReference type="DrugBank" id="DB09221">
    <property type="generic name" value="Polaprezinc"/>
</dbReference>
<dbReference type="GlyGen" id="P30711">
    <property type="glycosylation" value="1 site, 1 O-linked glycan (1 site)"/>
</dbReference>
<dbReference type="iPTMnet" id="P30711"/>
<dbReference type="PhosphoSitePlus" id="P30711"/>
<dbReference type="BioMuta" id="GSTT1"/>
<dbReference type="DMDM" id="21264427"/>
<dbReference type="jPOST" id="P30711"/>
<dbReference type="MassIVE" id="P30711"/>
<dbReference type="PeptideAtlas" id="P30711"/>
<dbReference type="ProteomicsDB" id="54733">
    <molecule id="P30711-1"/>
</dbReference>
<dbReference type="ProteomicsDB" id="66376"/>
<dbReference type="Pumba" id="P30711"/>
<dbReference type="TopDownProteomics" id="P30711-1">
    <molecule id="P30711-1"/>
</dbReference>
<dbReference type="DNASU" id="2952"/>
<dbReference type="Ensembl" id="ENST00000612885.4">
    <molecule id="P30711-1"/>
    <property type="protein sequence ID" value="ENSP00000481741.1"/>
    <property type="gene ID" value="ENSG00000277656.3"/>
</dbReference>
<dbReference type="GeneID" id="2952"/>
<dbReference type="KEGG" id="hsa:2952"/>
<dbReference type="MANE-Select" id="ENST00000612885.4">
    <property type="protein sequence ID" value="ENSP00000481741.1"/>
    <property type="RefSeq nucleotide sequence ID" value="NM_000853.4"/>
    <property type="RefSeq protein sequence ID" value="NP_000844.2"/>
</dbReference>
<dbReference type="UCSC" id="uc002zze.4">
    <molecule id="P30711-1"/>
    <property type="organism name" value="human"/>
</dbReference>
<dbReference type="AGR" id="HGNC:4641"/>
<dbReference type="CTD" id="2952"/>
<dbReference type="DisGeNET" id="2952"/>
<dbReference type="GeneCards" id="GSTT1"/>
<dbReference type="HGNC" id="HGNC:4641">
    <property type="gene designation" value="GSTT1"/>
</dbReference>
<dbReference type="MIM" id="600436">
    <property type="type" value="gene"/>
</dbReference>
<dbReference type="neXtProt" id="NX_P30711"/>
<dbReference type="OpenTargets" id="ENSG00000277656"/>
<dbReference type="PharmGKB" id="PA183"/>
<dbReference type="InParanoid" id="P30711"/>
<dbReference type="PAN-GO" id="P30711">
    <property type="GO annotations" value="3 GO annotations based on evolutionary models"/>
</dbReference>
<dbReference type="PhylomeDB" id="P30711"/>
<dbReference type="TreeFam" id="TF325759"/>
<dbReference type="BRENDA" id="2.5.1.18">
    <property type="organism ID" value="2681"/>
</dbReference>
<dbReference type="PathwayCommons" id="P30711"/>
<dbReference type="Reactome" id="R-HSA-156590">
    <property type="pathway name" value="Glutathione conjugation"/>
</dbReference>
<dbReference type="Reactome" id="R-HSA-9753281">
    <property type="pathway name" value="Paracetamol ADME"/>
</dbReference>
<dbReference type="SABIO-RK" id="P30711"/>
<dbReference type="SignaLink" id="P30711"/>
<dbReference type="BioGRID-ORCS" id="2952">
    <property type="hits" value="10 hits in 665 CRISPR screens"/>
</dbReference>
<dbReference type="EvolutionaryTrace" id="P30711"/>
<dbReference type="GeneWiki" id="GSTT1"/>
<dbReference type="GenomeRNAi" id="2952"/>
<dbReference type="Pharos" id="P30711">
    <property type="development level" value="Tbio"/>
</dbReference>
<dbReference type="PRO" id="PR:P30711"/>
<dbReference type="Proteomes" id="UP000005640">
    <property type="component" value="Unplaced"/>
</dbReference>
<dbReference type="RNAct" id="P30711">
    <property type="molecule type" value="protein"/>
</dbReference>
<dbReference type="Bgee" id="ENSG00000277656">
    <property type="expression patterns" value="Expressed in vena cava and 148 other cell types or tissues"/>
</dbReference>
<dbReference type="GO" id="GO:0005737">
    <property type="term" value="C:cytoplasm"/>
    <property type="evidence" value="ECO:0000318"/>
    <property type="project" value="GO_Central"/>
</dbReference>
<dbReference type="GO" id="GO:0005829">
    <property type="term" value="C:cytosol"/>
    <property type="evidence" value="ECO:0000314"/>
    <property type="project" value="UniProtKB"/>
</dbReference>
<dbReference type="GO" id="GO:0070062">
    <property type="term" value="C:extracellular exosome"/>
    <property type="evidence" value="ECO:0007005"/>
    <property type="project" value="UniProtKB"/>
</dbReference>
<dbReference type="GO" id="GO:0004602">
    <property type="term" value="F:glutathione peroxidase activity"/>
    <property type="evidence" value="ECO:0000314"/>
    <property type="project" value="UniProtKB"/>
</dbReference>
<dbReference type="GO" id="GO:0004364">
    <property type="term" value="F:glutathione transferase activity"/>
    <property type="evidence" value="ECO:0000314"/>
    <property type="project" value="UniProtKB"/>
</dbReference>
<dbReference type="GO" id="GO:0006749">
    <property type="term" value="P:glutathione metabolic process"/>
    <property type="evidence" value="ECO:0000314"/>
    <property type="project" value="UniProtKB"/>
</dbReference>
<dbReference type="CDD" id="cd03183">
    <property type="entry name" value="GST_C_Theta"/>
    <property type="match status" value="1"/>
</dbReference>
<dbReference type="CDD" id="cd03050">
    <property type="entry name" value="GST_N_Theta"/>
    <property type="match status" value="1"/>
</dbReference>
<dbReference type="FunFam" id="1.20.1050.10:FF:000008">
    <property type="entry name" value="Glutathione S-transferase theta-1"/>
    <property type="match status" value="1"/>
</dbReference>
<dbReference type="FunFam" id="3.40.30.10:FF:000086">
    <property type="entry name" value="Glutathione S-transferase theta-1"/>
    <property type="match status" value="1"/>
</dbReference>
<dbReference type="Gene3D" id="1.20.1050.10">
    <property type="match status" value="1"/>
</dbReference>
<dbReference type="Gene3D" id="3.40.30.10">
    <property type="entry name" value="Glutaredoxin"/>
    <property type="match status" value="1"/>
</dbReference>
<dbReference type="InterPro" id="IPR010987">
    <property type="entry name" value="Glutathione-S-Trfase_C-like"/>
</dbReference>
<dbReference type="InterPro" id="IPR036282">
    <property type="entry name" value="Glutathione-S-Trfase_C_sf"/>
</dbReference>
<dbReference type="InterPro" id="IPR040079">
    <property type="entry name" value="Glutathione_S-Trfase"/>
</dbReference>
<dbReference type="InterPro" id="IPR004045">
    <property type="entry name" value="Glutathione_S-Trfase_N"/>
</dbReference>
<dbReference type="InterPro" id="IPR004046">
    <property type="entry name" value="GST_C"/>
</dbReference>
<dbReference type="InterPro" id="IPR040077">
    <property type="entry name" value="GST_C_Theta"/>
</dbReference>
<dbReference type="InterPro" id="IPR040075">
    <property type="entry name" value="GST_N_Theta"/>
</dbReference>
<dbReference type="InterPro" id="IPR051369">
    <property type="entry name" value="GST_Theta"/>
</dbReference>
<dbReference type="InterPro" id="IPR036249">
    <property type="entry name" value="Thioredoxin-like_sf"/>
</dbReference>
<dbReference type="PANTHER" id="PTHR43917">
    <property type="match status" value="1"/>
</dbReference>
<dbReference type="PANTHER" id="PTHR43917:SF9">
    <property type="entry name" value="GLUTATHIONE S-TRANSFERASE THETA-1"/>
    <property type="match status" value="1"/>
</dbReference>
<dbReference type="Pfam" id="PF00043">
    <property type="entry name" value="GST_C"/>
    <property type="match status" value="1"/>
</dbReference>
<dbReference type="Pfam" id="PF13417">
    <property type="entry name" value="GST_N_3"/>
    <property type="match status" value="1"/>
</dbReference>
<dbReference type="SFLD" id="SFLDS00019">
    <property type="entry name" value="Glutathione_Transferase_(cytos"/>
    <property type="match status" value="1"/>
</dbReference>
<dbReference type="SFLD" id="SFLDG01153">
    <property type="entry name" value="Main.4:_Theta-like"/>
    <property type="match status" value="1"/>
</dbReference>
<dbReference type="SUPFAM" id="SSF47616">
    <property type="entry name" value="GST C-terminal domain-like"/>
    <property type="match status" value="1"/>
</dbReference>
<dbReference type="SUPFAM" id="SSF52833">
    <property type="entry name" value="Thioredoxin-like"/>
    <property type="match status" value="1"/>
</dbReference>
<dbReference type="PROSITE" id="PS50405">
    <property type="entry name" value="GST_CTER"/>
    <property type="match status" value="1"/>
</dbReference>
<dbReference type="PROSITE" id="PS50404">
    <property type="entry name" value="GST_NTER"/>
    <property type="match status" value="1"/>
</dbReference>
<reference key="1">
    <citation type="journal article" date="1994" name="Biochem. J.">
        <title>Human glutathione S-transferase theta (GSTT1): cDNA cloning and the characterization of a genetic polymorphism.</title>
        <authorList>
            <person name="Pemble S."/>
            <person name="Schroeder K.R."/>
            <person name="Spencer S.R."/>
            <person name="Meyer D.J."/>
            <person name="Hallier E."/>
            <person name="Bolt H.M."/>
            <person name="Ketterer B."/>
            <person name="Taylor J.B."/>
        </authorList>
    </citation>
    <scope>NUCLEOTIDE SEQUENCE [MRNA] (ISOFORM 1)</scope>
</reference>
<reference key="2">
    <citation type="journal article" date="1997" name="Arch. Biochem. Biophys.">
        <title>Kinetic characterization of recombinant human glutathione transferase T1-1, a polymorphic detoxication enzyme.</title>
        <authorList>
            <person name="Jemth P."/>
            <person name="Mannervik B."/>
        </authorList>
    </citation>
    <scope>NUCLEOTIDE SEQUENCE [MRNA] (ISOFORM 1)</scope>
    <scope>CHARACTERIZATION</scope>
</reference>
<reference key="3">
    <citation type="journal article" date="2000" name="Pharmacogenetics">
        <title>Characterization of the glutathione S-transferase GSTT1 deletion: discrimination of all genotypes by polymerase chain reaction indicates a trimodular genotype-phenotype correlation.</title>
        <authorList>
            <person name="Sprenger R."/>
            <person name="Schlagenhaufer R."/>
            <person name="Kerb R."/>
            <person name="Bruhn C."/>
            <person name="Brockmoeller J."/>
            <person name="Roots I."/>
            <person name="Brinkmann U."/>
        </authorList>
    </citation>
    <scope>NUCLEOTIDE SEQUENCE [GENOMIC DNA]</scope>
</reference>
<reference key="4">
    <citation type="submission" date="2001-03" db="EMBL/GenBank/DDBJ databases">
        <title>Complete genomic structure of human glutathione S-transferase TT1.</title>
        <authorList>
            <person name="Iida A."/>
            <person name="Kondo K."/>
            <person name="Kitamura Y."/>
            <person name="Mishima C."/>
            <person name="Osawa S."/>
            <person name="Kitamoto T."/>
            <person name="Harigae C."/>
            <person name="Nakamura Y."/>
        </authorList>
    </citation>
    <scope>NUCLEOTIDE SEQUENCE [GENOMIC DNA]</scope>
    <source>
        <tissue>Thymus</tissue>
    </source>
</reference>
<reference key="5">
    <citation type="journal article" date="2004" name="Genome Biol.">
        <title>A genome annotation-driven approach to cloning the human ORFeome.</title>
        <authorList>
            <person name="Collins J.E."/>
            <person name="Wright C.L."/>
            <person name="Edwards C.A."/>
            <person name="Davis M.P."/>
            <person name="Grinham J.A."/>
            <person name="Cole C.G."/>
            <person name="Goward M.E."/>
            <person name="Aguado B."/>
            <person name="Mallya M."/>
            <person name="Mokrab Y."/>
            <person name="Huckle E.J."/>
            <person name="Beare D.M."/>
            <person name="Dunham I."/>
        </authorList>
    </citation>
    <scope>NUCLEOTIDE SEQUENCE [LARGE SCALE MRNA] (ISOFORM 2)</scope>
</reference>
<reference key="6">
    <citation type="submission" date="2004-10" db="EMBL/GenBank/DDBJ databases">
        <title>Cloning of human full-length CDSs in BD Creator(TM) system donor vector.</title>
        <authorList>
            <person name="Kalnine N."/>
            <person name="Chen X."/>
            <person name="Rolfs A."/>
            <person name="Halleck A."/>
            <person name="Hines L."/>
            <person name="Eisenstein S."/>
            <person name="Koundinya M."/>
            <person name="Raphael J."/>
            <person name="Moreira D."/>
            <person name="Kelley T."/>
            <person name="LaBaer J."/>
            <person name="Lin Y."/>
            <person name="Phelan M."/>
            <person name="Farmer A."/>
        </authorList>
    </citation>
    <scope>NUCLEOTIDE SEQUENCE [LARGE SCALE MRNA] (ISOFORM 1)</scope>
    <scope>VARIANT ILE-169</scope>
</reference>
<reference key="7">
    <citation type="journal article" date="1999" name="Nature">
        <title>The DNA sequence of human chromosome 22.</title>
        <authorList>
            <person name="Dunham I."/>
            <person name="Hunt A.R."/>
            <person name="Collins J.E."/>
            <person name="Bruskiewich R."/>
            <person name="Beare D.M."/>
            <person name="Clamp M."/>
            <person name="Smink L.J."/>
            <person name="Ainscough R."/>
            <person name="Almeida J.P."/>
            <person name="Babbage A.K."/>
            <person name="Bagguley C."/>
            <person name="Bailey J."/>
            <person name="Barlow K.F."/>
            <person name="Bates K.N."/>
            <person name="Beasley O.P."/>
            <person name="Bird C.P."/>
            <person name="Blakey S.E."/>
            <person name="Bridgeman A.M."/>
            <person name="Buck D."/>
            <person name="Burgess J."/>
            <person name="Burrill W.D."/>
            <person name="Burton J."/>
            <person name="Carder C."/>
            <person name="Carter N.P."/>
            <person name="Chen Y."/>
            <person name="Clark G."/>
            <person name="Clegg S.M."/>
            <person name="Cobley V.E."/>
            <person name="Cole C.G."/>
            <person name="Collier R.E."/>
            <person name="Connor R."/>
            <person name="Conroy D."/>
            <person name="Corby N.R."/>
            <person name="Coville G.J."/>
            <person name="Cox A.V."/>
            <person name="Davis J."/>
            <person name="Dawson E."/>
            <person name="Dhami P.D."/>
            <person name="Dockree C."/>
            <person name="Dodsworth S.J."/>
            <person name="Durbin R.M."/>
            <person name="Ellington A.G."/>
            <person name="Evans K.L."/>
            <person name="Fey J.M."/>
            <person name="Fleming K."/>
            <person name="French L."/>
            <person name="Garner A.A."/>
            <person name="Gilbert J.G.R."/>
            <person name="Goward M.E."/>
            <person name="Grafham D.V."/>
            <person name="Griffiths M.N.D."/>
            <person name="Hall C."/>
            <person name="Hall R.E."/>
            <person name="Hall-Tamlyn G."/>
            <person name="Heathcott R.W."/>
            <person name="Ho S."/>
            <person name="Holmes S."/>
            <person name="Hunt S.E."/>
            <person name="Jones M.C."/>
            <person name="Kershaw J."/>
            <person name="Kimberley A.M."/>
            <person name="King A."/>
            <person name="Laird G.K."/>
            <person name="Langford C.F."/>
            <person name="Leversha M.A."/>
            <person name="Lloyd C."/>
            <person name="Lloyd D.M."/>
            <person name="Martyn I.D."/>
            <person name="Mashreghi-Mohammadi M."/>
            <person name="Matthews L.H."/>
            <person name="Mccann O.T."/>
            <person name="Mcclay J."/>
            <person name="Mclaren S."/>
            <person name="McMurray A.A."/>
            <person name="Milne S.A."/>
            <person name="Mortimore B.J."/>
            <person name="Odell C.N."/>
            <person name="Pavitt R."/>
            <person name="Pearce A.V."/>
            <person name="Pearson D."/>
            <person name="Phillimore B.J.C.T."/>
            <person name="Phillips S.H."/>
            <person name="Plumb R.W."/>
            <person name="Ramsay H."/>
            <person name="Ramsey Y."/>
            <person name="Rogers L."/>
            <person name="Ross M.T."/>
            <person name="Scott C.E."/>
            <person name="Sehra H.K."/>
            <person name="Skuce C.D."/>
            <person name="Smalley S."/>
            <person name="Smith M.L."/>
            <person name="Soderlund C."/>
            <person name="Spragon L."/>
            <person name="Steward C.A."/>
            <person name="Sulston J.E."/>
            <person name="Swann R.M."/>
            <person name="Vaudin M."/>
            <person name="Wall M."/>
            <person name="Wallis J.M."/>
            <person name="Whiteley M.N."/>
            <person name="Willey D.L."/>
            <person name="Williams L."/>
            <person name="Williams S.A."/>
            <person name="Williamson H."/>
            <person name="Wilmer T.E."/>
            <person name="Wilming L."/>
            <person name="Wright C.L."/>
            <person name="Hubbard T."/>
            <person name="Bentley D.R."/>
            <person name="Beck S."/>
            <person name="Rogers J."/>
            <person name="Shimizu N."/>
            <person name="Minoshima S."/>
            <person name="Kawasaki K."/>
            <person name="Sasaki T."/>
            <person name="Asakawa S."/>
            <person name="Kudoh J."/>
            <person name="Shintani A."/>
            <person name="Shibuya K."/>
            <person name="Yoshizaki Y."/>
            <person name="Aoki N."/>
            <person name="Mitsuyama S."/>
            <person name="Roe B.A."/>
            <person name="Chen F."/>
            <person name="Chu L."/>
            <person name="Crabtree J."/>
            <person name="Deschamps S."/>
            <person name="Do A."/>
            <person name="Do T."/>
            <person name="Dorman A."/>
            <person name="Fang F."/>
            <person name="Fu Y."/>
            <person name="Hu P."/>
            <person name="Hua A."/>
            <person name="Kenton S."/>
            <person name="Lai H."/>
            <person name="Lao H.I."/>
            <person name="Lewis J."/>
            <person name="Lewis S."/>
            <person name="Lin S.-P."/>
            <person name="Loh P."/>
            <person name="Malaj E."/>
            <person name="Nguyen T."/>
            <person name="Pan H."/>
            <person name="Phan S."/>
            <person name="Qi S."/>
            <person name="Qian Y."/>
            <person name="Ray L."/>
            <person name="Ren Q."/>
            <person name="Shaull S."/>
            <person name="Sloan D."/>
            <person name="Song L."/>
            <person name="Wang Q."/>
            <person name="Wang Y."/>
            <person name="Wang Z."/>
            <person name="White J."/>
            <person name="Willingham D."/>
            <person name="Wu H."/>
            <person name="Yao Z."/>
            <person name="Zhan M."/>
            <person name="Zhang G."/>
            <person name="Chissoe S."/>
            <person name="Murray J."/>
            <person name="Miller N."/>
            <person name="Minx P."/>
            <person name="Fulton R."/>
            <person name="Johnson D."/>
            <person name="Bemis G."/>
            <person name="Bentley D."/>
            <person name="Bradshaw H."/>
            <person name="Bourne S."/>
            <person name="Cordes M."/>
            <person name="Du Z."/>
            <person name="Fulton L."/>
            <person name="Goela D."/>
            <person name="Graves T."/>
            <person name="Hawkins J."/>
            <person name="Hinds K."/>
            <person name="Kemp K."/>
            <person name="Latreille P."/>
            <person name="Layman D."/>
            <person name="Ozersky P."/>
            <person name="Rohlfing T."/>
            <person name="Scheet P."/>
            <person name="Walker C."/>
            <person name="Wamsley A."/>
            <person name="Wohldmann P."/>
            <person name="Pepin K."/>
            <person name="Nelson J."/>
            <person name="Korf I."/>
            <person name="Bedell J.A."/>
            <person name="Hillier L.W."/>
            <person name="Mardis E."/>
            <person name="Waterston R."/>
            <person name="Wilson R."/>
            <person name="Emanuel B.S."/>
            <person name="Shaikh T."/>
            <person name="Kurahashi H."/>
            <person name="Saitta S."/>
            <person name="Budarf M.L."/>
            <person name="McDermid H.E."/>
            <person name="Johnson A."/>
            <person name="Wong A.C.C."/>
            <person name="Morrow B.E."/>
            <person name="Edelmann L."/>
            <person name="Kim U.J."/>
            <person name="Shizuya H."/>
            <person name="Simon M.I."/>
            <person name="Dumanski J.P."/>
            <person name="Peyrard M."/>
            <person name="Kedra D."/>
            <person name="Seroussi E."/>
            <person name="Fransson I."/>
            <person name="Tapia I."/>
            <person name="Bruder C.E."/>
            <person name="O'Brien K.P."/>
            <person name="Wilkinson P."/>
            <person name="Bodenteich A."/>
            <person name="Hartman K."/>
            <person name="Hu X."/>
            <person name="Khan A.S."/>
            <person name="Lane L."/>
            <person name="Tilahun Y."/>
            <person name="Wright H."/>
        </authorList>
    </citation>
    <scope>NUCLEOTIDE SEQUENCE [LARGE SCALE GENOMIC DNA]</scope>
</reference>
<reference key="8">
    <citation type="journal article" date="2004" name="Genome Res.">
        <title>The status, quality, and expansion of the NIH full-length cDNA project: the Mammalian Gene Collection (MGC).</title>
        <authorList>
            <consortium name="The MGC Project Team"/>
        </authorList>
    </citation>
    <scope>NUCLEOTIDE SEQUENCE [LARGE SCALE MRNA] (ISOFORM 1)</scope>
    <source>
        <tissue>Urinary bladder</tissue>
    </source>
</reference>
<reference key="9">
    <citation type="journal article" date="1991" name="Biochem. J.">
        <title>Theta, a new class of glutathione transferases purified from rat and man.</title>
        <authorList>
            <person name="Meyer D.J."/>
            <person name="Coles B."/>
            <person name="Pemble S.E."/>
            <person name="Gilmore K.S."/>
            <person name="Fraser G.M."/>
            <person name="Ketterer B."/>
        </authorList>
    </citation>
    <scope>PROTEIN SEQUENCE OF 2-47</scope>
    <source>
        <tissue>Liver</tissue>
    </source>
</reference>
<reference key="10">
    <citation type="journal article" date="1996" name="Biochem. J.">
        <title>The distribution of theta-class glutathione S-transferases in the liver and lung of mouse, rat and human.</title>
        <authorList>
            <person name="Mainwaring G.W."/>
            <person name="Williams S.M."/>
            <person name="Foster J.R."/>
            <person name="Tugwood J."/>
            <person name="Green T."/>
        </authorList>
    </citation>
    <scope>TISSUE SPECIFICITY</scope>
    <source>
        <tissue>Liver</tissue>
        <tissue>Lung</tissue>
    </source>
</reference>
<reference key="11">
    <citation type="journal article" date="2010" name="Biochim. Biophys. Acta">
        <title>Residue 234 is a master switch of the alternative-substrate activity profile of human and rodent theta class glutathione transferase T1-1.</title>
        <authorList>
            <person name="Shokeer A."/>
            <person name="Mannervik B."/>
        </authorList>
    </citation>
    <scope>FUNCTION</scope>
    <scope>CATALYTIC ACTIVITY</scope>
</reference>
<reference key="12">
    <citation type="journal article" date="2011" name="BMC Syst. Biol.">
        <title>Initial characterization of the human central proteome.</title>
        <authorList>
            <person name="Burkard T.R."/>
            <person name="Planyavsky M."/>
            <person name="Kaupe I."/>
            <person name="Breitwieser F.P."/>
            <person name="Buerckstuemmer T."/>
            <person name="Bennett K.L."/>
            <person name="Superti-Furga G."/>
            <person name="Colinge J."/>
        </authorList>
    </citation>
    <scope>IDENTIFICATION BY MASS SPECTROMETRY [LARGE SCALE ANALYSIS]</scope>
</reference>
<reference key="13">
    <citation type="journal article" date="2006" name="J. Mol. Biol.">
        <title>Structural basis of the suppressed catalytic activity of wild-type human glutathione transferase T1-1 compared to its W234R mutant.</title>
        <authorList>
            <person name="Tars K."/>
            <person name="Larsson A.K."/>
            <person name="Shokeer A."/>
            <person name="Olin B."/>
            <person name="Mannervik B."/>
            <person name="Kleywegt G.J."/>
        </authorList>
    </citation>
    <scope>X-RAY CRYSTALLOGRAPHY (1.5 ANGSTROMS) OF WILD-TYPE AND MUTANT ARG-234 IN COMPLEX WITH HEXYLGLUTATHIONE</scope>
    <scope>CATALYTIC ACTIVITY</scope>
    <scope>FUNCTION</scope>
    <scope>SUBUNIT</scope>
    <scope>MUTAGENESIS OF HIS-176 AND TRP-234</scope>
</reference>
<sequence>MGLELYLDLLSQPCRAVYIFAKKNDIPFELRIVDLIKGQHLSDAFAQVNPLKKVPALKDGDFTLTESVAILLYLTRKYKVPDYWYPQDLQARARVDEYLAWQHTTLRRSCLRALWHKVMFPVFLGEPVSPQTLAATLAELDVTLQLLEDKFLQNKAFLTGPHISLADLVAITELMHPVGAGCQVFEGRPKLATWRQRVEAAVGEDLFQEAHEVILKAKDFPPADPTIKQKLMPWVLAMIR</sequence>
<name>GSTT1_HUMAN</name>